<protein>
    <recommendedName>
        <fullName evidence="1">Signal recognition particle 54 kDa protein</fullName>
        <shortName evidence="1">SRP54</shortName>
        <ecNumber evidence="1">3.6.5.4</ecNumber>
    </recommendedName>
</protein>
<gene>
    <name evidence="1" type="primary">srp54</name>
    <name type="ordered locus">LS215_1339</name>
</gene>
<dbReference type="EC" id="3.6.5.4" evidence="1"/>
<dbReference type="EMBL" id="CP001399">
    <property type="protein sequence ID" value="ACP35347.1"/>
    <property type="molecule type" value="Genomic_DNA"/>
</dbReference>
<dbReference type="RefSeq" id="WP_012713654.1">
    <property type="nucleotide sequence ID" value="NC_012589.1"/>
</dbReference>
<dbReference type="SMR" id="C3MPN4"/>
<dbReference type="GeneID" id="7797855"/>
<dbReference type="KEGG" id="sis:LS215_1339"/>
<dbReference type="HOGENOM" id="CLU_009301_6_0_2"/>
<dbReference type="OrthoDB" id="52849at2157"/>
<dbReference type="Proteomes" id="UP000001747">
    <property type="component" value="Chromosome"/>
</dbReference>
<dbReference type="GO" id="GO:0048500">
    <property type="term" value="C:signal recognition particle"/>
    <property type="evidence" value="ECO:0007669"/>
    <property type="project" value="UniProtKB-UniRule"/>
</dbReference>
<dbReference type="GO" id="GO:0008312">
    <property type="term" value="F:7S RNA binding"/>
    <property type="evidence" value="ECO:0007669"/>
    <property type="project" value="UniProtKB-UniRule"/>
</dbReference>
<dbReference type="GO" id="GO:0016887">
    <property type="term" value="F:ATP hydrolysis activity"/>
    <property type="evidence" value="ECO:0007669"/>
    <property type="project" value="InterPro"/>
</dbReference>
<dbReference type="GO" id="GO:0005525">
    <property type="term" value="F:GTP binding"/>
    <property type="evidence" value="ECO:0007669"/>
    <property type="project" value="UniProtKB-UniRule"/>
</dbReference>
<dbReference type="GO" id="GO:0003924">
    <property type="term" value="F:GTPase activity"/>
    <property type="evidence" value="ECO:0007669"/>
    <property type="project" value="UniProtKB-UniRule"/>
</dbReference>
<dbReference type="GO" id="GO:0006614">
    <property type="term" value="P:SRP-dependent cotranslational protein targeting to membrane"/>
    <property type="evidence" value="ECO:0007669"/>
    <property type="project" value="InterPro"/>
</dbReference>
<dbReference type="CDD" id="cd17875">
    <property type="entry name" value="SRP54_G"/>
    <property type="match status" value="1"/>
</dbReference>
<dbReference type="FunFam" id="3.40.50.300:FF:000022">
    <property type="entry name" value="Signal recognition particle 54 kDa subunit"/>
    <property type="match status" value="1"/>
</dbReference>
<dbReference type="Gene3D" id="3.40.50.300">
    <property type="entry name" value="P-loop containing nucleotide triphosphate hydrolases"/>
    <property type="match status" value="1"/>
</dbReference>
<dbReference type="Gene3D" id="1.20.120.140">
    <property type="entry name" value="Signal recognition particle SRP54, nucleotide-binding domain"/>
    <property type="match status" value="1"/>
</dbReference>
<dbReference type="Gene3D" id="1.10.260.30">
    <property type="entry name" value="Signal recognition particle, SRP54 subunit, M-domain"/>
    <property type="match status" value="1"/>
</dbReference>
<dbReference type="HAMAP" id="MF_00306">
    <property type="entry name" value="SRP54"/>
    <property type="match status" value="1"/>
</dbReference>
<dbReference type="InterPro" id="IPR003593">
    <property type="entry name" value="AAA+_ATPase"/>
</dbReference>
<dbReference type="InterPro" id="IPR027417">
    <property type="entry name" value="P-loop_NTPase"/>
</dbReference>
<dbReference type="InterPro" id="IPR036891">
    <property type="entry name" value="Signal_recog_part_SRP54_M_sf"/>
</dbReference>
<dbReference type="InterPro" id="IPR013822">
    <property type="entry name" value="Signal_recog_particl_SRP54_hlx"/>
</dbReference>
<dbReference type="InterPro" id="IPR004125">
    <property type="entry name" value="Signal_recog_particle_SRP54_M"/>
</dbReference>
<dbReference type="InterPro" id="IPR036225">
    <property type="entry name" value="SRP/SRP_N"/>
</dbReference>
<dbReference type="InterPro" id="IPR022941">
    <property type="entry name" value="SRP54"/>
</dbReference>
<dbReference type="InterPro" id="IPR000897">
    <property type="entry name" value="SRP54_GTPase_dom"/>
</dbReference>
<dbReference type="InterPro" id="IPR042101">
    <property type="entry name" value="SRP54_N_sf"/>
</dbReference>
<dbReference type="PANTHER" id="PTHR11564">
    <property type="entry name" value="SIGNAL RECOGNITION PARTICLE 54K PROTEIN SRP54"/>
    <property type="match status" value="1"/>
</dbReference>
<dbReference type="PANTHER" id="PTHR11564:SF5">
    <property type="entry name" value="SIGNAL RECOGNITION PARTICLE SUBUNIT SRP54"/>
    <property type="match status" value="1"/>
</dbReference>
<dbReference type="Pfam" id="PF00448">
    <property type="entry name" value="SRP54"/>
    <property type="match status" value="1"/>
</dbReference>
<dbReference type="Pfam" id="PF02881">
    <property type="entry name" value="SRP54_N"/>
    <property type="match status" value="1"/>
</dbReference>
<dbReference type="Pfam" id="PF02978">
    <property type="entry name" value="SRP_SPB"/>
    <property type="match status" value="1"/>
</dbReference>
<dbReference type="SMART" id="SM00382">
    <property type="entry name" value="AAA"/>
    <property type="match status" value="1"/>
</dbReference>
<dbReference type="SMART" id="SM00962">
    <property type="entry name" value="SRP54"/>
    <property type="match status" value="1"/>
</dbReference>
<dbReference type="SMART" id="SM00963">
    <property type="entry name" value="SRP54_N"/>
    <property type="match status" value="1"/>
</dbReference>
<dbReference type="SUPFAM" id="SSF47364">
    <property type="entry name" value="Domain of the SRP/SRP receptor G-proteins"/>
    <property type="match status" value="1"/>
</dbReference>
<dbReference type="SUPFAM" id="SSF52540">
    <property type="entry name" value="P-loop containing nucleoside triphosphate hydrolases"/>
    <property type="match status" value="1"/>
</dbReference>
<dbReference type="SUPFAM" id="SSF47446">
    <property type="entry name" value="Signal peptide-binding domain"/>
    <property type="match status" value="1"/>
</dbReference>
<organism>
    <name type="scientific">Saccharolobus islandicus (strain L.S.2.15 / Lassen #1)</name>
    <name type="common">Sulfolobus islandicus</name>
    <dbReference type="NCBI Taxonomy" id="429572"/>
    <lineage>
        <taxon>Archaea</taxon>
        <taxon>Thermoproteota</taxon>
        <taxon>Thermoprotei</taxon>
        <taxon>Sulfolobales</taxon>
        <taxon>Sulfolobaceae</taxon>
        <taxon>Saccharolobus</taxon>
    </lineage>
</organism>
<evidence type="ECO:0000255" key="1">
    <source>
        <dbReference type="HAMAP-Rule" id="MF_00306"/>
    </source>
</evidence>
<comment type="function">
    <text evidence="1">Involved in targeting and insertion of nascent membrane proteins into the cytoplasmic membrane. Binds to the hydrophobic signal sequence of the ribosome-nascent chain (RNC) as it emerges from the ribosomes. The SRP-RNC complex is then targeted to the cytoplasmic membrane where it interacts with the SRP receptor FtsY.</text>
</comment>
<comment type="catalytic activity">
    <reaction evidence="1">
        <text>GTP + H2O = GDP + phosphate + H(+)</text>
        <dbReference type="Rhea" id="RHEA:19669"/>
        <dbReference type="ChEBI" id="CHEBI:15377"/>
        <dbReference type="ChEBI" id="CHEBI:15378"/>
        <dbReference type="ChEBI" id="CHEBI:37565"/>
        <dbReference type="ChEBI" id="CHEBI:43474"/>
        <dbReference type="ChEBI" id="CHEBI:58189"/>
        <dbReference type="EC" id="3.6.5.4"/>
    </reaction>
</comment>
<comment type="subunit">
    <text evidence="1">Part of the signal recognition particle protein translocation system, which is composed of SRP and FtsY. Archaeal SRP consists of a 7S RNA molecule of 300 nucleotides and two protein subunits: SRP54 and SRP19.</text>
</comment>
<comment type="subcellular location">
    <subcellularLocation>
        <location evidence="1">Cytoplasm</location>
    </subcellularLocation>
    <text evidence="1">The SRP-RNC complex is targeted to the cytoplasmic membrane.</text>
</comment>
<comment type="domain">
    <text evidence="1">Composed of three domains: the N-terminal N domain, which is responsible for interactions with the ribosome, the central G domain, which binds GTP, and the C-terminal M domain, which binds the RNA and the signal sequence of the RNC.</text>
</comment>
<comment type="similarity">
    <text evidence="1">Belongs to the GTP-binding SRP family. SRP54 subfamily.</text>
</comment>
<proteinExistence type="inferred from homology"/>
<accession>C3MPN4</accession>
<sequence>MLENIRDAVRKFLTGSTPYEKAVDEFIKELQKSLISSDVNVKLVFSLTAKIKERLNKEKPPSVLERKEWFISIVYDELSKLFGGDKEPNVNPTRLPFIIMLVGVQGSGKTTTAGKLAYFYKRRGYKVGLVAADVYRPAAYDQLLQLGNQIGVPVYGEPNNQNAIEIAKKGVDTFVKNKMDIIIVDTAGRHGYGEETKLLEEMKEIYEALKPDDVILVIDASIGQKAYDLASRFHQASPIGSIIITKMDGTAKGGGALSAVAATGATIKFIGTGEKIDELEIFNAKRYVSRILGMGDIESILEKVKGLEEYEKIQKKMEDVMEGKGKLTLRDVYAQIMALRKMGPLSKVLQHIPGLGVMLPTPSEDQLKLGEEKIRRWLAALNSMTYKELENPSIIDKSRMRRIAEGSGLEVEDVRELLEWYNNMNKLLKMVKRRRGSIDKLFGGKIG</sequence>
<keyword id="KW-0963">Cytoplasm</keyword>
<keyword id="KW-0342">GTP-binding</keyword>
<keyword id="KW-0378">Hydrolase</keyword>
<keyword id="KW-0547">Nucleotide-binding</keyword>
<keyword id="KW-0687">Ribonucleoprotein</keyword>
<keyword id="KW-0694">RNA-binding</keyword>
<keyword id="KW-0733">Signal recognition particle</keyword>
<reference key="1">
    <citation type="journal article" date="2009" name="Proc. Natl. Acad. Sci. U.S.A.">
        <title>Biogeography of the Sulfolobus islandicus pan-genome.</title>
        <authorList>
            <person name="Reno M.L."/>
            <person name="Held N.L."/>
            <person name="Fields C.J."/>
            <person name="Burke P.V."/>
            <person name="Whitaker R.J."/>
        </authorList>
    </citation>
    <scope>NUCLEOTIDE SEQUENCE [LARGE SCALE GENOMIC DNA]</scope>
    <source>
        <strain>L.S.2.15 / Lassen #1</strain>
    </source>
</reference>
<feature type="chain" id="PRO_1000205013" description="Signal recognition particle 54 kDa protein">
    <location>
        <begin position="1"/>
        <end position="447"/>
    </location>
</feature>
<feature type="binding site" evidence="1">
    <location>
        <begin position="103"/>
        <end position="110"/>
    </location>
    <ligand>
        <name>GTP</name>
        <dbReference type="ChEBI" id="CHEBI:37565"/>
    </ligand>
</feature>
<feature type="binding site" evidence="1">
    <location>
        <begin position="185"/>
        <end position="189"/>
    </location>
    <ligand>
        <name>GTP</name>
        <dbReference type="ChEBI" id="CHEBI:37565"/>
    </ligand>
</feature>
<feature type="binding site" evidence="1">
    <location>
        <begin position="245"/>
        <end position="248"/>
    </location>
    <ligand>
        <name>GTP</name>
        <dbReference type="ChEBI" id="CHEBI:37565"/>
    </ligand>
</feature>
<name>SRP54_SACI2</name>